<proteinExistence type="inferred from homology"/>
<dbReference type="EC" id="6.5.1.2" evidence="1"/>
<dbReference type="EMBL" id="CP000304">
    <property type="protein sequence ID" value="ABP79531.1"/>
    <property type="status" value="ALT_INIT"/>
    <property type="molecule type" value="Genomic_DNA"/>
</dbReference>
<dbReference type="RefSeq" id="WP_041755463.1">
    <property type="nucleotide sequence ID" value="NC_009434.1"/>
</dbReference>
<dbReference type="SMR" id="A4VKN0"/>
<dbReference type="KEGG" id="psa:PST_1857"/>
<dbReference type="eggNOG" id="COG0272">
    <property type="taxonomic scope" value="Bacteria"/>
</dbReference>
<dbReference type="HOGENOM" id="CLU_007764_2_1_6"/>
<dbReference type="Proteomes" id="UP000000233">
    <property type="component" value="Chromosome"/>
</dbReference>
<dbReference type="GO" id="GO:0005829">
    <property type="term" value="C:cytosol"/>
    <property type="evidence" value="ECO:0007669"/>
    <property type="project" value="TreeGrafter"/>
</dbReference>
<dbReference type="GO" id="GO:0003677">
    <property type="term" value="F:DNA binding"/>
    <property type="evidence" value="ECO:0007669"/>
    <property type="project" value="InterPro"/>
</dbReference>
<dbReference type="GO" id="GO:0003911">
    <property type="term" value="F:DNA ligase (NAD+) activity"/>
    <property type="evidence" value="ECO:0007669"/>
    <property type="project" value="UniProtKB-UniRule"/>
</dbReference>
<dbReference type="GO" id="GO:0046872">
    <property type="term" value="F:metal ion binding"/>
    <property type="evidence" value="ECO:0007669"/>
    <property type="project" value="UniProtKB-KW"/>
</dbReference>
<dbReference type="GO" id="GO:0006281">
    <property type="term" value="P:DNA repair"/>
    <property type="evidence" value="ECO:0007669"/>
    <property type="project" value="UniProtKB-KW"/>
</dbReference>
<dbReference type="GO" id="GO:0006260">
    <property type="term" value="P:DNA replication"/>
    <property type="evidence" value="ECO:0007669"/>
    <property type="project" value="UniProtKB-KW"/>
</dbReference>
<dbReference type="CDD" id="cd17748">
    <property type="entry name" value="BRCT_DNA_ligase_like"/>
    <property type="match status" value="1"/>
</dbReference>
<dbReference type="CDD" id="cd00114">
    <property type="entry name" value="LIGANc"/>
    <property type="match status" value="1"/>
</dbReference>
<dbReference type="FunFam" id="1.10.150.20:FF:000006">
    <property type="entry name" value="DNA ligase"/>
    <property type="match status" value="1"/>
</dbReference>
<dbReference type="FunFam" id="1.10.150.20:FF:000007">
    <property type="entry name" value="DNA ligase"/>
    <property type="match status" value="1"/>
</dbReference>
<dbReference type="FunFam" id="1.10.287.610:FF:000002">
    <property type="entry name" value="DNA ligase"/>
    <property type="match status" value="1"/>
</dbReference>
<dbReference type="FunFam" id="2.40.50.140:FF:000012">
    <property type="entry name" value="DNA ligase"/>
    <property type="match status" value="1"/>
</dbReference>
<dbReference type="FunFam" id="3.30.470.30:FF:000001">
    <property type="entry name" value="DNA ligase"/>
    <property type="match status" value="1"/>
</dbReference>
<dbReference type="Gene3D" id="6.20.10.30">
    <property type="match status" value="1"/>
</dbReference>
<dbReference type="Gene3D" id="1.10.150.20">
    <property type="entry name" value="5' to 3' exonuclease, C-terminal subdomain"/>
    <property type="match status" value="3"/>
</dbReference>
<dbReference type="Gene3D" id="3.40.50.10190">
    <property type="entry name" value="BRCT domain"/>
    <property type="match status" value="1"/>
</dbReference>
<dbReference type="Gene3D" id="3.30.470.30">
    <property type="entry name" value="DNA ligase/mRNA capping enzyme"/>
    <property type="match status" value="1"/>
</dbReference>
<dbReference type="Gene3D" id="1.10.287.610">
    <property type="entry name" value="Helix hairpin bin"/>
    <property type="match status" value="1"/>
</dbReference>
<dbReference type="Gene3D" id="2.40.50.140">
    <property type="entry name" value="Nucleic acid-binding proteins"/>
    <property type="match status" value="1"/>
</dbReference>
<dbReference type="HAMAP" id="MF_01588">
    <property type="entry name" value="DNA_ligase_A"/>
    <property type="match status" value="1"/>
</dbReference>
<dbReference type="InterPro" id="IPR001357">
    <property type="entry name" value="BRCT_dom"/>
</dbReference>
<dbReference type="InterPro" id="IPR036420">
    <property type="entry name" value="BRCT_dom_sf"/>
</dbReference>
<dbReference type="InterPro" id="IPR041663">
    <property type="entry name" value="DisA/LigA_HHH"/>
</dbReference>
<dbReference type="InterPro" id="IPR001679">
    <property type="entry name" value="DNA_ligase"/>
</dbReference>
<dbReference type="InterPro" id="IPR018239">
    <property type="entry name" value="DNA_ligase_AS"/>
</dbReference>
<dbReference type="InterPro" id="IPR033136">
    <property type="entry name" value="DNA_ligase_CS"/>
</dbReference>
<dbReference type="InterPro" id="IPR013839">
    <property type="entry name" value="DNAligase_adenylation"/>
</dbReference>
<dbReference type="InterPro" id="IPR013840">
    <property type="entry name" value="DNAligase_N"/>
</dbReference>
<dbReference type="InterPro" id="IPR003583">
    <property type="entry name" value="Hlx-hairpin-Hlx_DNA-bd_motif"/>
</dbReference>
<dbReference type="InterPro" id="IPR012340">
    <property type="entry name" value="NA-bd_OB-fold"/>
</dbReference>
<dbReference type="InterPro" id="IPR004150">
    <property type="entry name" value="NAD_DNA_ligase_OB"/>
</dbReference>
<dbReference type="InterPro" id="IPR010994">
    <property type="entry name" value="RuvA_2-like"/>
</dbReference>
<dbReference type="NCBIfam" id="TIGR00575">
    <property type="entry name" value="dnlj"/>
    <property type="match status" value="1"/>
</dbReference>
<dbReference type="NCBIfam" id="NF005932">
    <property type="entry name" value="PRK07956.1"/>
    <property type="match status" value="1"/>
</dbReference>
<dbReference type="PANTHER" id="PTHR23389">
    <property type="entry name" value="CHROMOSOME TRANSMISSION FIDELITY FACTOR 18"/>
    <property type="match status" value="1"/>
</dbReference>
<dbReference type="PANTHER" id="PTHR23389:SF9">
    <property type="entry name" value="DNA LIGASE"/>
    <property type="match status" value="1"/>
</dbReference>
<dbReference type="Pfam" id="PF00533">
    <property type="entry name" value="BRCT"/>
    <property type="match status" value="1"/>
</dbReference>
<dbReference type="Pfam" id="PF01653">
    <property type="entry name" value="DNA_ligase_aden"/>
    <property type="match status" value="1"/>
</dbReference>
<dbReference type="Pfam" id="PF03120">
    <property type="entry name" value="DNA_ligase_OB"/>
    <property type="match status" value="1"/>
</dbReference>
<dbReference type="Pfam" id="PF12826">
    <property type="entry name" value="HHH_2"/>
    <property type="match status" value="2"/>
</dbReference>
<dbReference type="Pfam" id="PF22745">
    <property type="entry name" value="Nlig-Ia"/>
    <property type="match status" value="1"/>
</dbReference>
<dbReference type="PIRSF" id="PIRSF001604">
    <property type="entry name" value="LigA"/>
    <property type="match status" value="1"/>
</dbReference>
<dbReference type="SMART" id="SM00292">
    <property type="entry name" value="BRCT"/>
    <property type="match status" value="1"/>
</dbReference>
<dbReference type="SMART" id="SM00278">
    <property type="entry name" value="HhH1"/>
    <property type="match status" value="4"/>
</dbReference>
<dbReference type="SMART" id="SM00532">
    <property type="entry name" value="LIGANc"/>
    <property type="match status" value="1"/>
</dbReference>
<dbReference type="SUPFAM" id="SSF52113">
    <property type="entry name" value="BRCT domain"/>
    <property type="match status" value="1"/>
</dbReference>
<dbReference type="SUPFAM" id="SSF56091">
    <property type="entry name" value="DNA ligase/mRNA capping enzyme, catalytic domain"/>
    <property type="match status" value="1"/>
</dbReference>
<dbReference type="SUPFAM" id="SSF50249">
    <property type="entry name" value="Nucleic acid-binding proteins"/>
    <property type="match status" value="1"/>
</dbReference>
<dbReference type="SUPFAM" id="SSF47781">
    <property type="entry name" value="RuvA domain 2-like"/>
    <property type="match status" value="2"/>
</dbReference>
<dbReference type="PROSITE" id="PS50172">
    <property type="entry name" value="BRCT"/>
    <property type="match status" value="1"/>
</dbReference>
<dbReference type="PROSITE" id="PS01055">
    <property type="entry name" value="DNA_LIGASE_N1"/>
    <property type="match status" value="1"/>
</dbReference>
<dbReference type="PROSITE" id="PS01056">
    <property type="entry name" value="DNA_LIGASE_N2"/>
    <property type="match status" value="1"/>
</dbReference>
<gene>
    <name evidence="1" type="primary">ligA</name>
    <name type="ordered locus">PST_1857</name>
</gene>
<reference key="1">
    <citation type="journal article" date="2008" name="Proc. Natl. Acad. Sci. U.S.A.">
        <title>Nitrogen fixation island and rhizosphere competence traits in the genome of root-associated Pseudomonas stutzeri A1501.</title>
        <authorList>
            <person name="Yan Y."/>
            <person name="Yang J."/>
            <person name="Dou Y."/>
            <person name="Chen M."/>
            <person name="Ping S."/>
            <person name="Peng J."/>
            <person name="Lu W."/>
            <person name="Zhang W."/>
            <person name="Yao Z."/>
            <person name="Li H."/>
            <person name="Liu W."/>
            <person name="He S."/>
            <person name="Geng L."/>
            <person name="Zhang X."/>
            <person name="Yang F."/>
            <person name="Yu H."/>
            <person name="Zhan Y."/>
            <person name="Li D."/>
            <person name="Lin Z."/>
            <person name="Wang Y."/>
            <person name="Elmerich C."/>
            <person name="Lin M."/>
            <person name="Jin Q."/>
        </authorList>
    </citation>
    <scope>NUCLEOTIDE SEQUENCE [LARGE SCALE GENOMIC DNA]</scope>
    <source>
        <strain>A1501</strain>
    </source>
</reference>
<keyword id="KW-0227">DNA damage</keyword>
<keyword id="KW-0234">DNA repair</keyword>
<keyword id="KW-0235">DNA replication</keyword>
<keyword id="KW-0436">Ligase</keyword>
<keyword id="KW-0460">Magnesium</keyword>
<keyword id="KW-0464">Manganese</keyword>
<keyword id="KW-0479">Metal-binding</keyword>
<keyword id="KW-0520">NAD</keyword>
<keyword id="KW-1185">Reference proteome</keyword>
<keyword id="KW-0862">Zinc</keyword>
<evidence type="ECO:0000255" key="1">
    <source>
        <dbReference type="HAMAP-Rule" id="MF_01588"/>
    </source>
</evidence>
<evidence type="ECO:0000305" key="2"/>
<comment type="function">
    <text evidence="1">DNA ligase that catalyzes the formation of phosphodiester linkages between 5'-phosphoryl and 3'-hydroxyl groups in double-stranded DNA using NAD as a coenzyme and as the energy source for the reaction. It is essential for DNA replication and repair of damaged DNA.</text>
</comment>
<comment type="catalytic activity">
    <reaction evidence="1">
        <text>NAD(+) + (deoxyribonucleotide)n-3'-hydroxyl + 5'-phospho-(deoxyribonucleotide)m = (deoxyribonucleotide)n+m + AMP + beta-nicotinamide D-nucleotide.</text>
        <dbReference type="EC" id="6.5.1.2"/>
    </reaction>
</comment>
<comment type="cofactor">
    <cofactor evidence="1">
        <name>Mg(2+)</name>
        <dbReference type="ChEBI" id="CHEBI:18420"/>
    </cofactor>
    <cofactor evidence="1">
        <name>Mn(2+)</name>
        <dbReference type="ChEBI" id="CHEBI:29035"/>
    </cofactor>
</comment>
<comment type="similarity">
    <text evidence="1">Belongs to the NAD-dependent DNA ligase family. LigA subfamily.</text>
</comment>
<comment type="sequence caution" evidence="2">
    <conflict type="erroneous initiation">
        <sequence resource="EMBL-CDS" id="ABP79531"/>
    </conflict>
</comment>
<feature type="chain" id="PRO_0000313379" description="DNA ligase">
    <location>
        <begin position="1"/>
        <end position="788"/>
    </location>
</feature>
<feature type="domain" description="BRCT" evidence="1">
    <location>
        <begin position="707"/>
        <end position="788"/>
    </location>
</feature>
<feature type="active site" description="N6-AMP-lysine intermediate" evidence="1">
    <location>
        <position position="126"/>
    </location>
</feature>
<feature type="binding site" evidence="1">
    <location>
        <begin position="35"/>
        <end position="39"/>
    </location>
    <ligand>
        <name>NAD(+)</name>
        <dbReference type="ChEBI" id="CHEBI:57540"/>
    </ligand>
</feature>
<feature type="binding site" evidence="1">
    <location>
        <begin position="84"/>
        <end position="85"/>
    </location>
    <ligand>
        <name>NAD(+)</name>
        <dbReference type="ChEBI" id="CHEBI:57540"/>
    </ligand>
</feature>
<feature type="binding site" evidence="1">
    <location>
        <position position="124"/>
    </location>
    <ligand>
        <name>NAD(+)</name>
        <dbReference type="ChEBI" id="CHEBI:57540"/>
    </ligand>
</feature>
<feature type="binding site" evidence="1">
    <location>
        <position position="147"/>
    </location>
    <ligand>
        <name>NAD(+)</name>
        <dbReference type="ChEBI" id="CHEBI:57540"/>
    </ligand>
</feature>
<feature type="binding site" evidence="1">
    <location>
        <position position="184"/>
    </location>
    <ligand>
        <name>NAD(+)</name>
        <dbReference type="ChEBI" id="CHEBI:57540"/>
    </ligand>
</feature>
<feature type="binding site" evidence="1">
    <location>
        <position position="300"/>
    </location>
    <ligand>
        <name>NAD(+)</name>
        <dbReference type="ChEBI" id="CHEBI:57540"/>
    </ligand>
</feature>
<feature type="binding site" evidence="1">
    <location>
        <position position="324"/>
    </location>
    <ligand>
        <name>NAD(+)</name>
        <dbReference type="ChEBI" id="CHEBI:57540"/>
    </ligand>
</feature>
<feature type="binding site" evidence="1">
    <location>
        <position position="418"/>
    </location>
    <ligand>
        <name>Zn(2+)</name>
        <dbReference type="ChEBI" id="CHEBI:29105"/>
    </ligand>
</feature>
<feature type="binding site" evidence="1">
    <location>
        <position position="421"/>
    </location>
    <ligand>
        <name>Zn(2+)</name>
        <dbReference type="ChEBI" id="CHEBI:29105"/>
    </ligand>
</feature>
<feature type="binding site" evidence="1">
    <location>
        <position position="448"/>
    </location>
    <ligand>
        <name>Zn(2+)</name>
        <dbReference type="ChEBI" id="CHEBI:29105"/>
    </ligand>
</feature>
<feature type="binding site" evidence="1">
    <location>
        <position position="454"/>
    </location>
    <ligand>
        <name>Zn(2+)</name>
        <dbReference type="ChEBI" id="CHEBI:29105"/>
    </ligand>
</feature>
<name>DNLJ_STUS1</name>
<organism>
    <name type="scientific">Stutzerimonas stutzeri (strain A1501)</name>
    <name type="common">Pseudomonas stutzeri</name>
    <dbReference type="NCBI Taxonomy" id="379731"/>
    <lineage>
        <taxon>Bacteria</taxon>
        <taxon>Pseudomonadati</taxon>
        <taxon>Pseudomonadota</taxon>
        <taxon>Gammaproteobacteria</taxon>
        <taxon>Pseudomonadales</taxon>
        <taxon>Pseudomonadaceae</taxon>
        <taxon>Stutzerimonas</taxon>
    </lineage>
</organism>
<sequence length="788" mass="86099">MPSAQTAAERIAELRSEIDAHNYRYYVLDEPSVPDAEYDRLFNELKALEAEHPELVTPESPTQRVGGAALAAFGQVRHEVPMLSLGNAFEEQDLLDFDRRVREGLDLPAGDLFGDGAVVEYSCEPKLDGLAVSLLYENGHLVRGATRGDGSTGEDISANVRTVRNIPLKLHGSGWPAVLEVRGEIYMPKAGFEALNARQLESGGKPFANPRNAAAGSLRQLDSKITASRPLELCAYGVGRSDGELPDTHIGILQALKGWGLPISRELKLAKGVAECRAYYDAIGAKRDALPYEIDGVVFKVNAVEQQRELGFRAREPRWAIAHKFPAREEITELLDVEFQVGRTGAITPVARLKPVQVAGVTVSNATLHNMDEVARLGVMIGDTVIVRRAGDVIPQILGVIAERRPTDARAVHVPEQCPVCGSAVERTQLIKRSKGRESVSEGSIYRCVGRLACQAQLKQAIIHFVSRRAMDIDGLGDKIVEQLVDKGLVRSPADLYCLTHEQVIELEGFAEISTRNLLHAIDASRKPSLARFVYALGIPDVGEETAKLLARALGSLDRIGRALPDVLVYLPDVGLEVAHEIHSFFEDEHNRTVIALLRERGVEPQEQGDVHPEFAACATLPDLLDRLNIPHIARTGAQRLAERFGSLEAIIAADWLDLRQVERLTEKAARSLRDYFDKPENAERARLIEAQLREFGMHWESERKAAEGLPLAGQTWVLTGTLETMSRDEGKARLEALGAKVAGSVSAKTTCVVAGPGAGSKLTKANELGVTVLDESQFIERLAQLGS</sequence>
<accession>A4VKN0</accession>
<protein>
    <recommendedName>
        <fullName evidence="1">DNA ligase</fullName>
        <ecNumber evidence="1">6.5.1.2</ecNumber>
    </recommendedName>
    <alternativeName>
        <fullName evidence="1">Polydeoxyribonucleotide synthase [NAD(+)]</fullName>
    </alternativeName>
</protein>